<protein>
    <recommendedName>
        <fullName evidence="1">Trigger factor</fullName>
        <shortName evidence="1">TF</shortName>
        <ecNumber evidence="1">5.2.1.8</ecNumber>
    </recommendedName>
    <alternativeName>
        <fullName evidence="1">PPIase</fullName>
    </alternativeName>
</protein>
<keyword id="KW-0131">Cell cycle</keyword>
<keyword id="KW-0132">Cell division</keyword>
<keyword id="KW-0143">Chaperone</keyword>
<keyword id="KW-0963">Cytoplasm</keyword>
<keyword id="KW-0413">Isomerase</keyword>
<keyword id="KW-1185">Reference proteome</keyword>
<keyword id="KW-0697">Rotamase</keyword>
<comment type="function">
    <text evidence="1">Involved in protein export. Acts as a chaperone by maintaining the newly synthesized protein in an open conformation. Functions as a peptidyl-prolyl cis-trans isomerase.</text>
</comment>
<comment type="catalytic activity">
    <reaction evidence="1">
        <text>[protein]-peptidylproline (omega=180) = [protein]-peptidylproline (omega=0)</text>
        <dbReference type="Rhea" id="RHEA:16237"/>
        <dbReference type="Rhea" id="RHEA-COMP:10747"/>
        <dbReference type="Rhea" id="RHEA-COMP:10748"/>
        <dbReference type="ChEBI" id="CHEBI:83833"/>
        <dbReference type="ChEBI" id="CHEBI:83834"/>
        <dbReference type="EC" id="5.2.1.8"/>
    </reaction>
</comment>
<comment type="subcellular location">
    <subcellularLocation>
        <location>Cytoplasm</location>
    </subcellularLocation>
    <text evidence="1">About half TF is bound to the ribosome near the polypeptide exit tunnel while the other half is free in the cytoplasm.</text>
</comment>
<comment type="domain">
    <text evidence="1">Consists of 3 domains; the N-terminus binds the ribosome, the middle domain has PPIase activity, while the C-terminus has intrinsic chaperone activity on its own.</text>
</comment>
<comment type="similarity">
    <text evidence="1">Belongs to the FKBP-type PPIase family. Tig subfamily.</text>
</comment>
<gene>
    <name evidence="1" type="primary">tig</name>
    <name type="ordered locus">Exig_2147</name>
</gene>
<reference key="1">
    <citation type="submission" date="2008-04" db="EMBL/GenBank/DDBJ databases">
        <title>Complete sequence of chromosome of Exiguobacterium sibiricum 255-15.</title>
        <authorList>
            <consortium name="US DOE Joint Genome Institute"/>
            <person name="Copeland A."/>
            <person name="Lucas S."/>
            <person name="Lapidus A."/>
            <person name="Glavina del Rio T."/>
            <person name="Dalin E."/>
            <person name="Tice H."/>
            <person name="Bruce D."/>
            <person name="Goodwin L."/>
            <person name="Pitluck S."/>
            <person name="Kiss H."/>
            <person name="Chertkov O."/>
            <person name="Monk C."/>
            <person name="Brettin T."/>
            <person name="Detter J.C."/>
            <person name="Han C."/>
            <person name="Kuske C.R."/>
            <person name="Schmutz J."/>
            <person name="Larimer F."/>
            <person name="Land M."/>
            <person name="Hauser L."/>
            <person name="Kyrpides N."/>
            <person name="Mikhailova N."/>
            <person name="Vishnivetskaya T."/>
            <person name="Rodrigues D.F."/>
            <person name="Gilichinsky D."/>
            <person name="Tiedje J."/>
            <person name="Richardson P."/>
        </authorList>
    </citation>
    <scope>NUCLEOTIDE SEQUENCE [LARGE SCALE GENOMIC DNA]</scope>
    <source>
        <strain>DSM 17290 / CCUG 55495 / CIP 109462 / JCM 13490 / 255-15</strain>
    </source>
</reference>
<proteinExistence type="inferred from homology"/>
<sequence length="430" mass="48026">MTAKWEKQSGSLGVLTYEAPAEAFDKAVDQAFKKVVKTLNTPGFRKGKMPRAMFNKMYGEEALYQDALDILYQDTIEGAVVESGIEPIALDNIDVETLEKGKPVEFKITFVIEPDATLGEYKGLEYTAVETDVTDEDVDAELKTMQERGAELVVKEDGAIENGDTVVFDFAGFDGENQFDGGTAENYSLVIGSGNFIPGFEEQMVGLKSGEQKDIDVTFPEEYHEASLAGKPVVFKVTIHEIKAQELPELTDEFAKEMDEEVSSLDELKTKIRTRLENTRKQEADASMRDELVEAATKNATVDLPEVMVENEVERMVQEFTQRIQSQGIDLNMYFQLTGTTEEAMRTEMKEQAEERVKARLVLKQIVADEKIEVTEEEAQAELQSMSELYNIPADQLETMLAPQGGLDTLKGDLQFRKAIDVLVDNAKAK</sequence>
<organism>
    <name type="scientific">Exiguobacterium sibiricum (strain DSM 17290 / CCUG 55495 / CIP 109462 / JCM 13490 / 255-15)</name>
    <dbReference type="NCBI Taxonomy" id="262543"/>
    <lineage>
        <taxon>Bacteria</taxon>
        <taxon>Bacillati</taxon>
        <taxon>Bacillota</taxon>
        <taxon>Bacilli</taxon>
        <taxon>Bacillales</taxon>
        <taxon>Bacillales Family XII. Incertae Sedis</taxon>
        <taxon>Exiguobacterium</taxon>
    </lineage>
</organism>
<name>TIG_EXIS2</name>
<feature type="chain" id="PRO_1000115534" description="Trigger factor">
    <location>
        <begin position="1"/>
        <end position="430"/>
    </location>
</feature>
<feature type="domain" description="PPIase FKBP-type" evidence="1">
    <location>
        <begin position="163"/>
        <end position="248"/>
    </location>
</feature>
<dbReference type="EC" id="5.2.1.8" evidence="1"/>
<dbReference type="EMBL" id="CP001022">
    <property type="protein sequence ID" value="ACB61599.1"/>
    <property type="molecule type" value="Genomic_DNA"/>
</dbReference>
<dbReference type="RefSeq" id="WP_012371016.1">
    <property type="nucleotide sequence ID" value="NC_010556.1"/>
</dbReference>
<dbReference type="SMR" id="B1YJW1"/>
<dbReference type="STRING" id="262543.Exig_2147"/>
<dbReference type="KEGG" id="esi:Exig_2147"/>
<dbReference type="eggNOG" id="COG0544">
    <property type="taxonomic scope" value="Bacteria"/>
</dbReference>
<dbReference type="HOGENOM" id="CLU_033058_3_2_9"/>
<dbReference type="OrthoDB" id="9767721at2"/>
<dbReference type="Proteomes" id="UP000001681">
    <property type="component" value="Chromosome"/>
</dbReference>
<dbReference type="GO" id="GO:0005737">
    <property type="term" value="C:cytoplasm"/>
    <property type="evidence" value="ECO:0007669"/>
    <property type="project" value="UniProtKB-SubCell"/>
</dbReference>
<dbReference type="GO" id="GO:0003755">
    <property type="term" value="F:peptidyl-prolyl cis-trans isomerase activity"/>
    <property type="evidence" value="ECO:0007669"/>
    <property type="project" value="UniProtKB-UniRule"/>
</dbReference>
<dbReference type="GO" id="GO:0044183">
    <property type="term" value="F:protein folding chaperone"/>
    <property type="evidence" value="ECO:0007669"/>
    <property type="project" value="TreeGrafter"/>
</dbReference>
<dbReference type="GO" id="GO:0043022">
    <property type="term" value="F:ribosome binding"/>
    <property type="evidence" value="ECO:0007669"/>
    <property type="project" value="TreeGrafter"/>
</dbReference>
<dbReference type="GO" id="GO:0051083">
    <property type="term" value="P:'de novo' cotranslational protein folding"/>
    <property type="evidence" value="ECO:0007669"/>
    <property type="project" value="TreeGrafter"/>
</dbReference>
<dbReference type="GO" id="GO:0051301">
    <property type="term" value="P:cell division"/>
    <property type="evidence" value="ECO:0007669"/>
    <property type="project" value="UniProtKB-KW"/>
</dbReference>
<dbReference type="GO" id="GO:0061077">
    <property type="term" value="P:chaperone-mediated protein folding"/>
    <property type="evidence" value="ECO:0007669"/>
    <property type="project" value="TreeGrafter"/>
</dbReference>
<dbReference type="GO" id="GO:0015031">
    <property type="term" value="P:protein transport"/>
    <property type="evidence" value="ECO:0007669"/>
    <property type="project" value="UniProtKB-UniRule"/>
</dbReference>
<dbReference type="GO" id="GO:0043335">
    <property type="term" value="P:protein unfolding"/>
    <property type="evidence" value="ECO:0007669"/>
    <property type="project" value="TreeGrafter"/>
</dbReference>
<dbReference type="FunFam" id="3.10.50.40:FF:000001">
    <property type="entry name" value="Trigger factor"/>
    <property type="match status" value="1"/>
</dbReference>
<dbReference type="Gene3D" id="3.10.50.40">
    <property type="match status" value="1"/>
</dbReference>
<dbReference type="Gene3D" id="3.30.70.1050">
    <property type="entry name" value="Trigger factor ribosome-binding domain"/>
    <property type="match status" value="1"/>
</dbReference>
<dbReference type="Gene3D" id="1.10.3120.10">
    <property type="entry name" value="Trigger factor, C-terminal domain"/>
    <property type="match status" value="1"/>
</dbReference>
<dbReference type="HAMAP" id="MF_00303">
    <property type="entry name" value="Trigger_factor_Tig"/>
    <property type="match status" value="1"/>
</dbReference>
<dbReference type="InterPro" id="IPR046357">
    <property type="entry name" value="PPIase_dom_sf"/>
</dbReference>
<dbReference type="InterPro" id="IPR001179">
    <property type="entry name" value="PPIase_FKBP_dom"/>
</dbReference>
<dbReference type="InterPro" id="IPR005215">
    <property type="entry name" value="Trig_fac"/>
</dbReference>
<dbReference type="InterPro" id="IPR008880">
    <property type="entry name" value="Trigger_fac_C"/>
</dbReference>
<dbReference type="InterPro" id="IPR037041">
    <property type="entry name" value="Trigger_fac_C_sf"/>
</dbReference>
<dbReference type="InterPro" id="IPR008881">
    <property type="entry name" value="Trigger_fac_ribosome-bd_bac"/>
</dbReference>
<dbReference type="InterPro" id="IPR036611">
    <property type="entry name" value="Trigger_fac_ribosome-bd_sf"/>
</dbReference>
<dbReference type="InterPro" id="IPR027304">
    <property type="entry name" value="Trigger_fact/SurA_dom_sf"/>
</dbReference>
<dbReference type="NCBIfam" id="TIGR00115">
    <property type="entry name" value="tig"/>
    <property type="match status" value="1"/>
</dbReference>
<dbReference type="PANTHER" id="PTHR30560">
    <property type="entry name" value="TRIGGER FACTOR CHAPERONE AND PEPTIDYL-PROLYL CIS/TRANS ISOMERASE"/>
    <property type="match status" value="1"/>
</dbReference>
<dbReference type="PANTHER" id="PTHR30560:SF3">
    <property type="entry name" value="TRIGGER FACTOR-LIKE PROTEIN TIG, CHLOROPLASTIC"/>
    <property type="match status" value="1"/>
</dbReference>
<dbReference type="Pfam" id="PF00254">
    <property type="entry name" value="FKBP_C"/>
    <property type="match status" value="1"/>
</dbReference>
<dbReference type="Pfam" id="PF05698">
    <property type="entry name" value="Trigger_C"/>
    <property type="match status" value="1"/>
</dbReference>
<dbReference type="Pfam" id="PF05697">
    <property type="entry name" value="Trigger_N"/>
    <property type="match status" value="1"/>
</dbReference>
<dbReference type="PIRSF" id="PIRSF003095">
    <property type="entry name" value="Trigger_factor"/>
    <property type="match status" value="1"/>
</dbReference>
<dbReference type="SUPFAM" id="SSF54534">
    <property type="entry name" value="FKBP-like"/>
    <property type="match status" value="1"/>
</dbReference>
<dbReference type="SUPFAM" id="SSF109998">
    <property type="entry name" value="Triger factor/SurA peptide-binding domain-like"/>
    <property type="match status" value="1"/>
</dbReference>
<dbReference type="SUPFAM" id="SSF102735">
    <property type="entry name" value="Trigger factor ribosome-binding domain"/>
    <property type="match status" value="1"/>
</dbReference>
<dbReference type="PROSITE" id="PS50059">
    <property type="entry name" value="FKBP_PPIASE"/>
    <property type="match status" value="1"/>
</dbReference>
<accession>B1YJW1</accession>
<evidence type="ECO:0000255" key="1">
    <source>
        <dbReference type="HAMAP-Rule" id="MF_00303"/>
    </source>
</evidence>